<comment type="sequence caution" evidence="2">
    <conflict type="erroneous initiation">
        <sequence resource="EMBL-CDS" id="AAH87523"/>
    </conflict>
</comment>
<accession>Q5PPS5</accession>
<sequence>MLHKKPQRANENGISQRKKPSDQDNSSVKEGDVAGVHQLATLLMLLDPSDDVSRILCTDALYQLDRIEEAHKMLSLALSNSSQRSPILSRLALLQFKKGFIYDGNQLIKKVIQIGDTSCLLPIMDIFKEEDRKLMQNHCHAKALSILQSQQGDSYIKEAIAYLSFAIIASGGHAKDSLLARARCYGQLGQKKTAIFDFNAILKDEPYNAEALSGKGFMHLTLNQQKEAVHDICLAIKADASYAIREIHSLKPEAQLIITEWVYNHCRTLLAELLTANNNFQSDPTFNELEVLAEALIKTDNKAAHFHILYTDILIAKEKYDEAFNYLRKSFNGNAIDETVRARYGVLHVKYRNLLVAAQELCTLAGKQPEEVEILVKFMDKRERQSLFQAAGQEGNSLIQENQHEKALDYYSLAVISSNNNPKYLRQRAMCLTHLRDYSSAIKDIDKAILRHSSHDLKTQAEDYCSKGHILLLSCDEDAATTQYMKAISMEHASAVASINNMPGRVKLAGIFSQVANRYFEQRLFEESWKMSECGLLIDENNQELKRLKARIKREASGCIVH</sequence>
<proteinExistence type="evidence at transcript level"/>
<gene>
    <name type="primary">ttc34</name>
</gene>
<evidence type="ECO:0000256" key="1">
    <source>
        <dbReference type="SAM" id="MobiDB-lite"/>
    </source>
</evidence>
<evidence type="ECO:0000305" key="2"/>
<keyword id="KW-1185">Reference proteome</keyword>
<keyword id="KW-0677">Repeat</keyword>
<keyword id="KW-0802">TPR repeat</keyword>
<protein>
    <recommendedName>
        <fullName>Tetratricopeptide repeat protein 34</fullName>
        <shortName>TPR repeat protein 34</shortName>
    </recommendedName>
</protein>
<name>TTC34_XENLA</name>
<organism>
    <name type="scientific">Xenopus laevis</name>
    <name type="common">African clawed frog</name>
    <dbReference type="NCBI Taxonomy" id="8355"/>
    <lineage>
        <taxon>Eukaryota</taxon>
        <taxon>Metazoa</taxon>
        <taxon>Chordata</taxon>
        <taxon>Craniata</taxon>
        <taxon>Vertebrata</taxon>
        <taxon>Euteleostomi</taxon>
        <taxon>Amphibia</taxon>
        <taxon>Batrachia</taxon>
        <taxon>Anura</taxon>
        <taxon>Pipoidea</taxon>
        <taxon>Pipidae</taxon>
        <taxon>Xenopodinae</taxon>
        <taxon>Xenopus</taxon>
        <taxon>Xenopus</taxon>
    </lineage>
</organism>
<reference key="1">
    <citation type="submission" date="2004-12" db="EMBL/GenBank/DDBJ databases">
        <authorList>
            <consortium name="NIH - Xenopus Gene Collection (XGC) project"/>
        </authorList>
    </citation>
    <scope>NUCLEOTIDE SEQUENCE [LARGE SCALE MRNA]</scope>
    <source>
        <tissue>Testis</tissue>
    </source>
</reference>
<dbReference type="EMBL" id="BC087523">
    <property type="protein sequence ID" value="AAH87523.1"/>
    <property type="status" value="ALT_INIT"/>
    <property type="molecule type" value="mRNA"/>
</dbReference>
<dbReference type="AGR" id="Xenbase:XB-GENE-991683"/>
<dbReference type="Xenbase" id="XB-GENE-991683">
    <property type="gene designation" value="ttc34.S"/>
</dbReference>
<dbReference type="Proteomes" id="UP000186698">
    <property type="component" value="Unplaced"/>
</dbReference>
<dbReference type="Gene3D" id="1.25.40.10">
    <property type="entry name" value="Tetratricopeptide repeat domain"/>
    <property type="match status" value="2"/>
</dbReference>
<dbReference type="InterPro" id="IPR011990">
    <property type="entry name" value="TPR-like_helical_dom_sf"/>
</dbReference>
<dbReference type="InterPro" id="IPR019734">
    <property type="entry name" value="TPR_rpt"/>
</dbReference>
<dbReference type="InterPro" id="IPR042161">
    <property type="entry name" value="TTC34"/>
</dbReference>
<dbReference type="PANTHER" id="PTHR44874">
    <property type="entry name" value="TETRATRICOPEPTIDE REPEAT PROTEIN 34"/>
    <property type="match status" value="1"/>
</dbReference>
<dbReference type="PANTHER" id="PTHR44874:SF1">
    <property type="entry name" value="TETRATRICOPEPTIDE REPEAT PROTEIN 34"/>
    <property type="match status" value="1"/>
</dbReference>
<dbReference type="SMART" id="SM00028">
    <property type="entry name" value="TPR"/>
    <property type="match status" value="5"/>
</dbReference>
<dbReference type="SUPFAM" id="SSF48452">
    <property type="entry name" value="TPR-like"/>
    <property type="match status" value="2"/>
</dbReference>
<dbReference type="PROSITE" id="PS50293">
    <property type="entry name" value="TPR_REGION"/>
    <property type="match status" value="2"/>
</dbReference>
<feature type="chain" id="PRO_0000341280" description="Tetratricopeptide repeat protein 34">
    <location>
        <begin position="1"/>
        <end position="562"/>
    </location>
</feature>
<feature type="repeat" description="TPR 1">
    <location>
        <begin position="51"/>
        <end position="84"/>
    </location>
</feature>
<feature type="repeat" description="TPR 2">
    <location>
        <begin position="175"/>
        <end position="208"/>
    </location>
</feature>
<feature type="repeat" description="TPR 3">
    <location>
        <begin position="210"/>
        <end position="242"/>
    </location>
</feature>
<feature type="repeat" description="TPR 4">
    <location>
        <begin position="304"/>
        <end position="337"/>
    </location>
</feature>
<feature type="repeat" description="TPR 5">
    <location>
        <begin position="388"/>
        <end position="421"/>
    </location>
</feature>
<feature type="repeat" description="TPR 6">
    <location>
        <begin position="423"/>
        <end position="455"/>
    </location>
</feature>
<feature type="repeat" description="TPR 7">
    <location>
        <begin position="461"/>
        <end position="494"/>
    </location>
</feature>
<feature type="repeat" description="TPR 8">
    <location>
        <begin position="509"/>
        <end position="542"/>
    </location>
</feature>
<feature type="region of interest" description="Disordered" evidence="1">
    <location>
        <begin position="1"/>
        <end position="30"/>
    </location>
</feature>
<feature type="compositionally biased region" description="Basic and acidic residues" evidence="1">
    <location>
        <begin position="19"/>
        <end position="30"/>
    </location>
</feature>